<gene>
    <name evidence="1" type="primary">rbcL</name>
</gene>
<dbReference type="EC" id="4.1.1.39" evidence="1"/>
<dbReference type="EMBL" id="X83628">
    <property type="protein sequence ID" value="CAA58607.1"/>
    <property type="molecule type" value="Genomic_DNA"/>
</dbReference>
<dbReference type="SMR" id="Q33383"/>
<dbReference type="GO" id="GO:0009507">
    <property type="term" value="C:chloroplast"/>
    <property type="evidence" value="ECO:0007669"/>
    <property type="project" value="UniProtKB-SubCell"/>
</dbReference>
<dbReference type="GO" id="GO:0000287">
    <property type="term" value="F:magnesium ion binding"/>
    <property type="evidence" value="ECO:0007669"/>
    <property type="project" value="InterPro"/>
</dbReference>
<dbReference type="GO" id="GO:0004497">
    <property type="term" value="F:monooxygenase activity"/>
    <property type="evidence" value="ECO:0007669"/>
    <property type="project" value="UniProtKB-KW"/>
</dbReference>
<dbReference type="GO" id="GO:0016984">
    <property type="term" value="F:ribulose-bisphosphate carboxylase activity"/>
    <property type="evidence" value="ECO:0007669"/>
    <property type="project" value="UniProtKB-EC"/>
</dbReference>
<dbReference type="GO" id="GO:0009853">
    <property type="term" value="P:photorespiration"/>
    <property type="evidence" value="ECO:0007669"/>
    <property type="project" value="UniProtKB-KW"/>
</dbReference>
<dbReference type="GO" id="GO:0019253">
    <property type="term" value="P:reductive pentose-phosphate cycle"/>
    <property type="evidence" value="ECO:0007669"/>
    <property type="project" value="UniProtKB-KW"/>
</dbReference>
<dbReference type="CDD" id="cd08212">
    <property type="entry name" value="RuBisCO_large_I"/>
    <property type="match status" value="1"/>
</dbReference>
<dbReference type="FunFam" id="3.20.20.110:FF:000001">
    <property type="entry name" value="Ribulose bisphosphate carboxylase large chain"/>
    <property type="match status" value="1"/>
</dbReference>
<dbReference type="FunFam" id="3.30.70.150:FF:000001">
    <property type="entry name" value="Ribulose bisphosphate carboxylase large chain"/>
    <property type="match status" value="1"/>
</dbReference>
<dbReference type="Gene3D" id="3.20.20.110">
    <property type="entry name" value="Ribulose bisphosphate carboxylase, large subunit, C-terminal domain"/>
    <property type="match status" value="1"/>
</dbReference>
<dbReference type="Gene3D" id="3.30.70.150">
    <property type="entry name" value="RuBisCO large subunit, N-terminal domain"/>
    <property type="match status" value="1"/>
</dbReference>
<dbReference type="HAMAP" id="MF_01338">
    <property type="entry name" value="RuBisCO_L_type1"/>
    <property type="match status" value="1"/>
</dbReference>
<dbReference type="InterPro" id="IPR033966">
    <property type="entry name" value="RuBisCO"/>
</dbReference>
<dbReference type="InterPro" id="IPR020878">
    <property type="entry name" value="RuBisCo_large_chain_AS"/>
</dbReference>
<dbReference type="InterPro" id="IPR000685">
    <property type="entry name" value="RuBisCO_lsu_C"/>
</dbReference>
<dbReference type="InterPro" id="IPR036376">
    <property type="entry name" value="RuBisCO_lsu_C_sf"/>
</dbReference>
<dbReference type="InterPro" id="IPR017443">
    <property type="entry name" value="RuBisCO_lsu_fd_N"/>
</dbReference>
<dbReference type="InterPro" id="IPR036422">
    <property type="entry name" value="RuBisCO_lsu_N_sf"/>
</dbReference>
<dbReference type="InterPro" id="IPR020888">
    <property type="entry name" value="RuBisCO_lsuI"/>
</dbReference>
<dbReference type="NCBIfam" id="NF003252">
    <property type="entry name" value="PRK04208.1"/>
    <property type="match status" value="1"/>
</dbReference>
<dbReference type="PANTHER" id="PTHR42704">
    <property type="entry name" value="RIBULOSE BISPHOSPHATE CARBOXYLASE"/>
    <property type="match status" value="1"/>
</dbReference>
<dbReference type="PANTHER" id="PTHR42704:SF15">
    <property type="entry name" value="RIBULOSE BISPHOSPHATE CARBOXYLASE LARGE CHAIN"/>
    <property type="match status" value="1"/>
</dbReference>
<dbReference type="Pfam" id="PF00016">
    <property type="entry name" value="RuBisCO_large"/>
    <property type="match status" value="1"/>
</dbReference>
<dbReference type="Pfam" id="PF02788">
    <property type="entry name" value="RuBisCO_large_N"/>
    <property type="match status" value="1"/>
</dbReference>
<dbReference type="SFLD" id="SFLDG01052">
    <property type="entry name" value="RuBisCO"/>
    <property type="match status" value="1"/>
</dbReference>
<dbReference type="SFLD" id="SFLDS00014">
    <property type="entry name" value="RuBisCO"/>
    <property type="match status" value="1"/>
</dbReference>
<dbReference type="SFLD" id="SFLDG00301">
    <property type="entry name" value="RuBisCO-like_proteins"/>
    <property type="match status" value="1"/>
</dbReference>
<dbReference type="SUPFAM" id="SSF51649">
    <property type="entry name" value="RuBisCo, C-terminal domain"/>
    <property type="match status" value="1"/>
</dbReference>
<dbReference type="SUPFAM" id="SSF54966">
    <property type="entry name" value="RuBisCO, large subunit, small (N-terminal) domain"/>
    <property type="match status" value="1"/>
</dbReference>
<dbReference type="PROSITE" id="PS00157">
    <property type="entry name" value="RUBISCO_LARGE"/>
    <property type="match status" value="1"/>
</dbReference>
<reference key="1">
    <citation type="journal article" date="1995" name="Ann. Mo. Bot. Gard.">
        <title>Subfamilial and tribal relationships in the Rubiaceae based on rbcL sequence data.</title>
        <authorList>
            <person name="Bremer B."/>
            <person name="Andreasen K."/>
            <person name="Olsson D."/>
        </authorList>
    </citation>
    <scope>NUCLEOTIDE SEQUENCE [GENOMIC DNA]</scope>
</reference>
<evidence type="ECO:0000255" key="1">
    <source>
        <dbReference type="HAMAP-Rule" id="MF_01338"/>
    </source>
</evidence>
<proteinExistence type="inferred from homology"/>
<protein>
    <recommendedName>
        <fullName evidence="1">Ribulose bisphosphate carboxylase large chain</fullName>
        <shortName evidence="1">RuBisCO large subunit</shortName>
        <ecNumber evidence="1">4.1.1.39</ecNumber>
    </recommendedName>
</protein>
<keyword id="KW-0113">Calvin cycle</keyword>
<keyword id="KW-0120">Carbon dioxide fixation</keyword>
<keyword id="KW-0150">Chloroplast</keyword>
<keyword id="KW-1015">Disulfide bond</keyword>
<keyword id="KW-0456">Lyase</keyword>
<keyword id="KW-0460">Magnesium</keyword>
<keyword id="KW-0479">Metal-binding</keyword>
<keyword id="KW-0488">Methylation</keyword>
<keyword id="KW-0503">Monooxygenase</keyword>
<keyword id="KW-0560">Oxidoreductase</keyword>
<keyword id="KW-0601">Photorespiration</keyword>
<keyword id="KW-0602">Photosynthesis</keyword>
<keyword id="KW-0934">Plastid</keyword>
<comment type="function">
    <text evidence="1">RuBisCO catalyzes two reactions: the carboxylation of D-ribulose 1,5-bisphosphate, the primary event in carbon dioxide fixation, as well as the oxidative fragmentation of the pentose substrate in the photorespiration process. Both reactions occur simultaneously and in competition at the same active site.</text>
</comment>
<comment type="catalytic activity">
    <reaction evidence="1">
        <text>2 (2R)-3-phosphoglycerate + 2 H(+) = D-ribulose 1,5-bisphosphate + CO2 + H2O</text>
        <dbReference type="Rhea" id="RHEA:23124"/>
        <dbReference type="ChEBI" id="CHEBI:15377"/>
        <dbReference type="ChEBI" id="CHEBI:15378"/>
        <dbReference type="ChEBI" id="CHEBI:16526"/>
        <dbReference type="ChEBI" id="CHEBI:57870"/>
        <dbReference type="ChEBI" id="CHEBI:58272"/>
        <dbReference type="EC" id="4.1.1.39"/>
    </reaction>
</comment>
<comment type="catalytic activity">
    <reaction evidence="1">
        <text>D-ribulose 1,5-bisphosphate + O2 = 2-phosphoglycolate + (2R)-3-phosphoglycerate + 2 H(+)</text>
        <dbReference type="Rhea" id="RHEA:36631"/>
        <dbReference type="ChEBI" id="CHEBI:15378"/>
        <dbReference type="ChEBI" id="CHEBI:15379"/>
        <dbReference type="ChEBI" id="CHEBI:57870"/>
        <dbReference type="ChEBI" id="CHEBI:58033"/>
        <dbReference type="ChEBI" id="CHEBI:58272"/>
    </reaction>
</comment>
<comment type="cofactor">
    <cofactor evidence="1">
        <name>Mg(2+)</name>
        <dbReference type="ChEBI" id="CHEBI:18420"/>
    </cofactor>
    <text evidence="1">Binds 1 Mg(2+) ion per subunit.</text>
</comment>
<comment type="subunit">
    <text evidence="1">Heterohexadecamer of 8 large chains and 8 small chains; disulfide-linked. The disulfide link is formed within the large subunit homodimers.</text>
</comment>
<comment type="subcellular location">
    <subcellularLocation>
        <location>Plastid</location>
        <location>Chloroplast</location>
    </subcellularLocation>
</comment>
<comment type="PTM">
    <text evidence="1">The disulfide bond which can form in the large chain dimeric partners within the hexadecamer appears to be associated with oxidative stress and protein turnover.</text>
</comment>
<comment type="miscellaneous">
    <text evidence="1">The basic functional RuBisCO is composed of a large chain homodimer in a 'head-to-tail' conformation. In form I RuBisCO this homodimer is arranged in a barrel-like tetramer with the small subunits forming a tetrameric 'cap' on each end of the 'barrel'.</text>
</comment>
<comment type="similarity">
    <text evidence="1">Belongs to the RuBisCO large chain family. Type I subfamily.</text>
</comment>
<feature type="chain" id="PRO_0000062400" description="Ribulose bisphosphate carboxylase large chain">
    <location>
        <begin position="1" status="less than"/>
        <end position="468"/>
    </location>
</feature>
<feature type="active site" description="Proton acceptor" evidence="1">
    <location>
        <position position="166"/>
    </location>
</feature>
<feature type="active site" description="Proton acceptor" evidence="1">
    <location>
        <position position="285"/>
    </location>
</feature>
<feature type="binding site" description="in homodimeric partner" evidence="1">
    <location>
        <position position="114"/>
    </location>
    <ligand>
        <name>substrate</name>
    </ligand>
</feature>
<feature type="binding site" evidence="1">
    <location>
        <position position="164"/>
    </location>
    <ligand>
        <name>substrate</name>
    </ligand>
</feature>
<feature type="binding site" evidence="1">
    <location>
        <position position="168"/>
    </location>
    <ligand>
        <name>substrate</name>
    </ligand>
</feature>
<feature type="binding site" description="via carbamate group" evidence="1">
    <location>
        <position position="192"/>
    </location>
    <ligand>
        <name>Mg(2+)</name>
        <dbReference type="ChEBI" id="CHEBI:18420"/>
    </ligand>
</feature>
<feature type="binding site" evidence="1">
    <location>
        <position position="194"/>
    </location>
    <ligand>
        <name>Mg(2+)</name>
        <dbReference type="ChEBI" id="CHEBI:18420"/>
    </ligand>
</feature>
<feature type="binding site" evidence="1">
    <location>
        <position position="195"/>
    </location>
    <ligand>
        <name>Mg(2+)</name>
        <dbReference type="ChEBI" id="CHEBI:18420"/>
    </ligand>
</feature>
<feature type="binding site" evidence="1">
    <location>
        <position position="286"/>
    </location>
    <ligand>
        <name>substrate</name>
    </ligand>
</feature>
<feature type="binding site" evidence="1">
    <location>
        <position position="318"/>
    </location>
    <ligand>
        <name>substrate</name>
    </ligand>
</feature>
<feature type="binding site" evidence="1">
    <location>
        <position position="370"/>
    </location>
    <ligand>
        <name>substrate</name>
    </ligand>
</feature>
<feature type="site" description="Transition state stabilizer" evidence="1">
    <location>
        <position position="325"/>
    </location>
</feature>
<feature type="modified residue" description="N6,N6,N6-trimethyllysine" evidence="1">
    <location>
        <position position="5"/>
    </location>
</feature>
<feature type="modified residue" description="N6-carboxylysine" evidence="1">
    <location>
        <position position="192"/>
    </location>
</feature>
<feature type="disulfide bond" description="Interchain; in linked form" evidence="1">
    <location>
        <position position="238"/>
    </location>
</feature>
<feature type="non-terminal residue">
    <location>
        <position position="1"/>
    </location>
</feature>
<accession>Q33383</accession>
<organism>
    <name type="scientific">Catesbaea spinosa</name>
    <dbReference type="NCBI Taxonomy" id="43452"/>
    <lineage>
        <taxon>Eukaryota</taxon>
        <taxon>Viridiplantae</taxon>
        <taxon>Streptophyta</taxon>
        <taxon>Embryophyta</taxon>
        <taxon>Tracheophyta</taxon>
        <taxon>Spermatophyta</taxon>
        <taxon>Magnoliopsida</taxon>
        <taxon>eudicotyledons</taxon>
        <taxon>Gunneridae</taxon>
        <taxon>Pentapetalae</taxon>
        <taxon>asterids</taxon>
        <taxon>lamiids</taxon>
        <taxon>Gentianales</taxon>
        <taxon>Rubiaceae</taxon>
        <taxon>Cinchonoideae</taxon>
        <taxon>Chiococceae</taxon>
        <taxon>Catesbaea</taxon>
    </lineage>
</organism>
<geneLocation type="chloroplast"/>
<sequence length="468" mass="51929">SVGFKAGVKDYKLNYYTPQYQTKDTDILAAFRVTPQPGVPPEERGAAVAAESSTGTWTTVWTDGLTSLDRYKGRCYHIEPVVGEEDQYIAYVAYPLDLFEEGSVTNMFTSIVGNVFGFKALRALRLEDLRIPTSYIKTFQGPPHGIQVERDKLNKYGRPLLGCTIKPKLGLSAKNYGRAVYECLRGGLDFTKDDENVNSQPFMRWRDRFLFCAEALYKAQAETGEIKGHYLNATAGTCEEMIKRAVFARELGVPIVMHDYLTGGFTANTTLAHYCRDNGLLLHIHRAMHAVIDRQKNHGMHFRVLAKALRLSGGDHVHAGTVVGKLEGERDITLGFVDLLRDDFIEKDRSRGIYFTQDWVSLPGVIPVASGGIHVWHMPALTEIFGDDAVLQFGGGTLGHPWGNAPGAVANRVALEACVKARNEGRDLAVEGNEIIREASKWSPELAAACEVWKEIRFNFAAVDTLDP</sequence>
<name>RBL_CATSP</name>